<keyword id="KW-0076">Bacteriochlorophyll</keyword>
<keyword id="KW-0148">Chlorophyll</keyword>
<keyword id="KW-0151">Chlorosome</keyword>
<keyword id="KW-0157">Chromophore</keyword>
<keyword id="KW-0903">Direct protein sequencing</keyword>
<keyword id="KW-0249">Electron transport</keyword>
<keyword id="KW-0460">Magnesium</keyword>
<keyword id="KW-0479">Metal-binding</keyword>
<keyword id="KW-0602">Photosynthesis</keyword>
<keyword id="KW-0813">Transport</keyword>
<comment type="function">
    <text>Component of the photosynthetic apparatus. The light harvesting B740 complex binds bacteriochlorophyll c.</text>
</comment>
<comment type="subcellular location">
    <subcellularLocation>
        <location>Chlorosome</location>
        <location>Chlorosome envelope</location>
    </subcellularLocation>
</comment>
<comment type="similarity">
    <text evidence="2">Belongs to the BChl C/E-binding protein family.</text>
</comment>
<dbReference type="EMBL" id="CP001108">
    <property type="protein sequence ID" value="ACF46972.1"/>
    <property type="molecule type" value="Genomic_DNA"/>
</dbReference>
<dbReference type="PIR" id="S05561">
    <property type="entry name" value="S05561"/>
</dbReference>
<dbReference type="RefSeq" id="WP_012506505.1">
    <property type="nucleotide sequence ID" value="NC_011059.1"/>
</dbReference>
<dbReference type="SMR" id="P15528"/>
<dbReference type="STRING" id="290512.Paes_1960"/>
<dbReference type="KEGG" id="paa:Paes_1960"/>
<dbReference type="eggNOG" id="ENOG5032TTJ">
    <property type="taxonomic scope" value="Bacteria"/>
</dbReference>
<dbReference type="HOGENOM" id="CLU_194367_0_0_10"/>
<dbReference type="Proteomes" id="UP000002725">
    <property type="component" value="Chromosome"/>
</dbReference>
<dbReference type="GO" id="GO:0033105">
    <property type="term" value="C:chlorosome envelope"/>
    <property type="evidence" value="ECO:0007669"/>
    <property type="project" value="UniProtKB-SubCell"/>
</dbReference>
<dbReference type="GO" id="GO:0042314">
    <property type="term" value="F:bacteriochlorophyll binding"/>
    <property type="evidence" value="ECO:0007669"/>
    <property type="project" value="UniProtKB-KW"/>
</dbReference>
<dbReference type="GO" id="GO:0046872">
    <property type="term" value="F:metal ion binding"/>
    <property type="evidence" value="ECO:0007669"/>
    <property type="project" value="UniProtKB-KW"/>
</dbReference>
<dbReference type="GO" id="GO:0015979">
    <property type="term" value="P:photosynthesis"/>
    <property type="evidence" value="ECO:0007669"/>
    <property type="project" value="UniProtKB-KW"/>
</dbReference>
<dbReference type="Gene3D" id="1.20.5.950">
    <property type="entry name" value="bacteriochlorophyll c-binding protein"/>
    <property type="match status" value="1"/>
</dbReference>
<dbReference type="InterPro" id="IPR001470">
    <property type="entry name" value="Bchl_c-bd"/>
</dbReference>
<dbReference type="InterPro" id="IPR038387">
    <property type="entry name" value="Bchl_C-bd_sf"/>
</dbReference>
<dbReference type="Pfam" id="PF02043">
    <property type="entry name" value="Bac_chlorC"/>
    <property type="match status" value="1"/>
</dbReference>
<dbReference type="PIRSF" id="PIRSF002903">
    <property type="entry name" value="Bac_chlorC_bd"/>
    <property type="match status" value="1"/>
</dbReference>
<dbReference type="PRINTS" id="PR00656">
    <property type="entry name" value="BCHLROPHYLLC"/>
</dbReference>
<gene>
    <name type="primary">csmA</name>
    <name type="ordered locus">Paes_1960</name>
</gene>
<protein>
    <recommendedName>
        <fullName>Bacteriochlorophyll c-binding protein</fullName>
        <shortName>BChl c-binding</shortName>
    </recommendedName>
    <alternativeName>
        <fullName>Chlorosome protein A</fullName>
    </alternativeName>
</protein>
<reference key="1">
    <citation type="submission" date="2008-06" db="EMBL/GenBank/DDBJ databases">
        <title>Complete sequence of chromosome of Prosthecochloris aestuarii DSM 271.</title>
        <authorList>
            <consortium name="US DOE Joint Genome Institute"/>
            <person name="Lucas S."/>
            <person name="Copeland A."/>
            <person name="Lapidus A."/>
            <person name="Glavina del Rio T."/>
            <person name="Dalin E."/>
            <person name="Tice H."/>
            <person name="Bruce D."/>
            <person name="Goodwin L."/>
            <person name="Pitluck S."/>
            <person name="Schmutz J."/>
            <person name="Larimer F."/>
            <person name="Land M."/>
            <person name="Hauser L."/>
            <person name="Kyrpides N."/>
            <person name="Anderson I."/>
            <person name="Liu Z."/>
            <person name="Li T."/>
            <person name="Zhao F."/>
            <person name="Overmann J."/>
            <person name="Bryant D.A."/>
            <person name="Richardson P."/>
        </authorList>
    </citation>
    <scope>NUCLEOTIDE SEQUENCE [LARGE SCALE GENOMIC DNA]</scope>
    <source>
        <strain>DSM 271 / SK 413</strain>
    </source>
</reference>
<reference key="2">
    <citation type="journal article" date="1988" name="FEBS Lett.">
        <title>The BChlc/e-binding polypeptides from chlorosomes of green photosynthetic bacteria.</title>
        <authorList>
            <person name="Wagner-Huber R."/>
            <person name="Brunisholz R."/>
            <person name="Frank G."/>
            <person name="Zuber H."/>
        </authorList>
    </citation>
    <scope>PROTEIN SEQUENCE OF 1-48</scope>
</reference>
<sequence>MSGGGVFTDILAAAGRIFEVMVEGHWETVGMLFDSLGKGTMRINRNAYGNLGGGGGSLRGSSPEVSGFAVPTKAVESKFAK</sequence>
<proteinExistence type="evidence at protein level"/>
<name>CSMA_PROA2</name>
<accession>P15528</accession>
<accession>B4S526</accession>
<evidence type="ECO:0000255" key="1"/>
<evidence type="ECO:0000305" key="2"/>
<feature type="chain" id="PRO_0000219553" description="Bacteriochlorophyll c-binding protein">
    <location>
        <begin position="1"/>
        <end status="unknown"/>
    </location>
</feature>
<feature type="propeptide" id="PRO_0000352795" evidence="1">
    <location>
        <begin status="unknown"/>
        <end position="81"/>
    </location>
</feature>
<feature type="binding site" description="axial binding residue" evidence="1">
    <location>
        <position position="25"/>
    </location>
    <ligand>
        <name>a bacteriochlorophyll c</name>
        <dbReference type="ChEBI" id="CHEBI:60197"/>
    </ligand>
    <ligandPart>
        <name>Mg</name>
        <dbReference type="ChEBI" id="CHEBI:25107"/>
    </ligandPart>
</feature>
<feature type="sequence conflict" description="In Ref. 2; AA sequence." evidence="2" ref="2">
    <original>S</original>
    <variation>N</variation>
    <location>
        <position position="2"/>
    </location>
</feature>
<organism>
    <name type="scientific">Prosthecochloris aestuarii (strain DSM 271 / SK 413)</name>
    <dbReference type="NCBI Taxonomy" id="290512"/>
    <lineage>
        <taxon>Bacteria</taxon>
        <taxon>Pseudomonadati</taxon>
        <taxon>Chlorobiota</taxon>
        <taxon>Chlorobiia</taxon>
        <taxon>Chlorobiales</taxon>
        <taxon>Chlorobiaceae</taxon>
        <taxon>Prosthecochloris</taxon>
    </lineage>
</organism>